<accession>Q92244</accession>
<dbReference type="EC" id="3.2.1.8"/>
<dbReference type="EMBL" id="AY144350">
    <property type="protein sequence ID" value="AAB06572.2"/>
    <property type="molecule type" value="Genomic_DNA"/>
</dbReference>
<dbReference type="SMR" id="Q92244"/>
<dbReference type="CAZy" id="GH11">
    <property type="family name" value="Glycoside Hydrolase Family 11"/>
</dbReference>
<dbReference type="GlyCosmos" id="Q92244">
    <property type="glycosylation" value="2 sites, No reported glycans"/>
</dbReference>
<dbReference type="OMA" id="ISLYGWT"/>
<dbReference type="UniPathway" id="UPA00114"/>
<dbReference type="Proteomes" id="UP000515153">
    <property type="component" value="Unplaced"/>
</dbReference>
<dbReference type="GO" id="GO:0005576">
    <property type="term" value="C:extracellular region"/>
    <property type="evidence" value="ECO:0007669"/>
    <property type="project" value="UniProtKB-SubCell"/>
</dbReference>
<dbReference type="GO" id="GO:0031176">
    <property type="term" value="F:endo-1,4-beta-xylanase activity"/>
    <property type="evidence" value="ECO:0007669"/>
    <property type="project" value="UniProtKB-EC"/>
</dbReference>
<dbReference type="GO" id="GO:0045493">
    <property type="term" value="P:xylan catabolic process"/>
    <property type="evidence" value="ECO:0007669"/>
    <property type="project" value="UniProtKB-UniPathway"/>
</dbReference>
<dbReference type="FunFam" id="2.60.120.180:FF:000001">
    <property type="entry name" value="Endo-1,4-beta-xylanase"/>
    <property type="match status" value="1"/>
</dbReference>
<dbReference type="Gene3D" id="2.60.120.180">
    <property type="match status" value="1"/>
</dbReference>
<dbReference type="InterPro" id="IPR013320">
    <property type="entry name" value="ConA-like_dom_sf"/>
</dbReference>
<dbReference type="InterPro" id="IPR013319">
    <property type="entry name" value="GH11/12"/>
</dbReference>
<dbReference type="InterPro" id="IPR018208">
    <property type="entry name" value="GH11_AS_1"/>
</dbReference>
<dbReference type="InterPro" id="IPR033123">
    <property type="entry name" value="GH11_dom"/>
</dbReference>
<dbReference type="InterPro" id="IPR001137">
    <property type="entry name" value="Glyco_hydro_11"/>
</dbReference>
<dbReference type="PANTHER" id="PTHR46828">
    <property type="entry name" value="ENDO-1,4-BETA-XYLANASE A-RELATED"/>
    <property type="match status" value="1"/>
</dbReference>
<dbReference type="PANTHER" id="PTHR46828:SF2">
    <property type="entry name" value="ENDO-1,4-BETA-XYLANASE A-RELATED"/>
    <property type="match status" value="1"/>
</dbReference>
<dbReference type="Pfam" id="PF00457">
    <property type="entry name" value="Glyco_hydro_11"/>
    <property type="match status" value="1"/>
</dbReference>
<dbReference type="PRINTS" id="PR00911">
    <property type="entry name" value="GLHYDRLASE11"/>
</dbReference>
<dbReference type="SUPFAM" id="SSF49899">
    <property type="entry name" value="Concanavalin A-like lectins/glucanases"/>
    <property type="match status" value="1"/>
</dbReference>
<dbReference type="PROSITE" id="PS00776">
    <property type="entry name" value="GH11_1"/>
    <property type="match status" value="1"/>
</dbReference>
<dbReference type="PROSITE" id="PS51761">
    <property type="entry name" value="GH11_3"/>
    <property type="match status" value="1"/>
</dbReference>
<comment type="function">
    <text evidence="5">Endo-1,4-beta-xylanase involved in the hydrolysis of xylan, a major structural heterogeneous polysaccharide found in plant biomass representing the second most abundant polysaccharide in the biosphere, after cellulose.</text>
</comment>
<comment type="catalytic activity">
    <reaction evidence="5">
        <text>Endohydrolysis of (1-&gt;4)-beta-D-xylosidic linkages in xylans.</text>
        <dbReference type="EC" id="3.2.1.8"/>
    </reaction>
</comment>
<comment type="pathway">
    <text>Glycan degradation; xylan degradation.</text>
</comment>
<comment type="subcellular location">
    <subcellularLocation>
        <location evidence="5">Secreted</location>
    </subcellularLocation>
</comment>
<comment type="similarity">
    <text evidence="6">Belongs to the glycosyl hydrolase 11 (cellulase G) family.</text>
</comment>
<proteinExistence type="evidence at protein level"/>
<protein>
    <recommendedName>
        <fullName>Endo-1,4-beta-xylanase 3</fullName>
        <shortName>Xylanase 3</shortName>
        <ecNumber>3.2.1.8</ecNumber>
    </recommendedName>
    <alternativeName>
        <fullName>1,4-beta-D-xylan xylanohydrolase 3</fullName>
    </alternativeName>
</protein>
<organism>
    <name type="scientific">Pyricularia grisea</name>
    <name type="common">Crabgrass-specific blast fungus</name>
    <name type="synonym">Magnaporthe grisea</name>
    <dbReference type="NCBI Taxonomy" id="148305"/>
    <lineage>
        <taxon>Eukaryota</taxon>
        <taxon>Fungi</taxon>
        <taxon>Dikarya</taxon>
        <taxon>Ascomycota</taxon>
        <taxon>Pezizomycotina</taxon>
        <taxon>Sordariomycetes</taxon>
        <taxon>Sordariomycetidae</taxon>
        <taxon>Magnaporthales</taxon>
        <taxon>Pyriculariaceae</taxon>
        <taxon>Pyricularia</taxon>
    </lineage>
</organism>
<sequence length="236" mass="25555">MQILTWALAALAAIPAVTAAPVETVEASSMDELVERSPNVTLVARGTPSSTGTHNGFYYSHWTDNAGADVTYSMGGGGQFSYTWRNSGNFVGGKGWNPGNAGRVINYSGSYSPQGNSYLAVYGWTRNPLIEYYVVESFGSYNPSSGATNRGSFTSDGSTYDILVSTRYNQPSIDGTKTFQQFWSVRRNKRASGTVTFANHVNAWRNAGLNLGNQWNYQILAVEGYHSSGSASMTVR</sequence>
<reference key="1">
    <citation type="submission" date="2002-08" db="EMBL/GenBank/DDBJ databases">
        <title>Three differentially expressed xylanases from the rice blast fungus are required for pathogenicity.</title>
        <authorList>
            <person name="Wu S.-C."/>
            <person name="Darvill A.G."/>
            <person name="Albersheim P."/>
        </authorList>
    </citation>
    <scope>NUCLEOTIDE SEQUENCE [GENOMIC DNA]</scope>
    <source>
        <strain>CP987</strain>
    </source>
</reference>
<reference key="2">
    <citation type="journal article" date="1997" name="Mol. Plant Microbe Interact.">
        <title>Deletion of two endo-beta-1,4-xylanase genes reveals additional isozymes secreted by the rice blast fungus.</title>
        <authorList>
            <person name="Wu S.C."/>
            <person name="Ham K.S."/>
            <person name="Darvill A.G."/>
            <person name="Albersheim P."/>
        </authorList>
    </citation>
    <scope>PROTEIN SEQUENCE OF 46-62</scope>
    <scope>SUBCELLULAR LOCATION</scope>
    <scope>FUNCTION</scope>
    <scope>CATALYTIC ACTIVITY</scope>
    <source>
        <strain>CP987</strain>
    </source>
</reference>
<feature type="signal peptide" evidence="2">
    <location>
        <begin position="1"/>
        <end position="45"/>
    </location>
</feature>
<feature type="chain" id="PRO_0000429622" description="Endo-1,4-beta-xylanase 3">
    <location>
        <begin position="46"/>
        <end position="236"/>
    </location>
</feature>
<feature type="domain" description="GH11" evidence="3">
    <location>
        <begin position="46"/>
        <end position="236"/>
    </location>
</feature>
<feature type="active site" description="Nucleophile" evidence="4">
    <location>
        <position position="131"/>
    </location>
</feature>
<feature type="active site" description="Proton donor" evidence="1">
    <location>
        <position position="223"/>
    </location>
</feature>
<feature type="glycosylation site" description="N-linked (GlcNAc...) asparagine" evidence="2">
    <location>
        <position position="39"/>
    </location>
</feature>
<feature type="glycosylation site" description="N-linked (GlcNAc...) asparagine" evidence="2">
    <location>
        <position position="106"/>
    </location>
</feature>
<keyword id="KW-0119">Carbohydrate metabolism</keyword>
<keyword id="KW-0903">Direct protein sequencing</keyword>
<keyword id="KW-0325">Glycoprotein</keyword>
<keyword id="KW-0326">Glycosidase</keyword>
<keyword id="KW-0378">Hydrolase</keyword>
<keyword id="KW-0624">Polysaccharide degradation</keyword>
<keyword id="KW-1185">Reference proteome</keyword>
<keyword id="KW-0964">Secreted</keyword>
<keyword id="KW-0732">Signal</keyword>
<keyword id="KW-0858">Xylan degradation</keyword>
<evidence type="ECO:0000250" key="1"/>
<evidence type="ECO:0000255" key="2"/>
<evidence type="ECO:0000255" key="3">
    <source>
        <dbReference type="PROSITE-ProRule" id="PRU01097"/>
    </source>
</evidence>
<evidence type="ECO:0000255" key="4">
    <source>
        <dbReference type="PROSITE-ProRule" id="PRU10062"/>
    </source>
</evidence>
<evidence type="ECO:0000269" key="5">
    <source ref="2"/>
</evidence>
<evidence type="ECO:0000305" key="6"/>
<gene>
    <name type="primary">XYL3</name>
</gene>
<name>XYN3_PYRGI</name>